<dbReference type="EMBL" id="BA000018">
    <property type="protein sequence ID" value="BAB41856.1"/>
    <property type="status" value="ALT_INIT"/>
    <property type="molecule type" value="Genomic_DNA"/>
</dbReference>
<dbReference type="PIR" id="E89837">
    <property type="entry name" value="E89837"/>
</dbReference>
<dbReference type="RefSeq" id="WP_001090985.1">
    <property type="nucleotide sequence ID" value="NC_002745.2"/>
</dbReference>
<dbReference type="SMR" id="Q7A6Y6"/>
<dbReference type="EnsemblBacteria" id="BAB41856">
    <property type="protein sequence ID" value="BAB41856"/>
    <property type="gene ID" value="BAB41856"/>
</dbReference>
<dbReference type="KEGG" id="sau:SA0623"/>
<dbReference type="HOGENOM" id="CLU_166896_0_0_9"/>
<dbReference type="GO" id="GO:0005737">
    <property type="term" value="C:cytoplasm"/>
    <property type="evidence" value="ECO:0007669"/>
    <property type="project" value="UniProtKB-SubCell"/>
</dbReference>
<dbReference type="GO" id="GO:0003677">
    <property type="term" value="F:DNA binding"/>
    <property type="evidence" value="ECO:0007669"/>
    <property type="project" value="UniProtKB-KW"/>
</dbReference>
<dbReference type="GO" id="GO:0006355">
    <property type="term" value="P:regulation of DNA-templated transcription"/>
    <property type="evidence" value="ECO:0007669"/>
    <property type="project" value="InterPro"/>
</dbReference>
<dbReference type="Gene3D" id="1.10.10.10">
    <property type="entry name" value="Winged helix-like DNA-binding domain superfamily/Winged helix DNA-binding domain"/>
    <property type="match status" value="1"/>
</dbReference>
<dbReference type="InterPro" id="IPR010166">
    <property type="entry name" value="SarA/Rot_dom"/>
</dbReference>
<dbReference type="InterPro" id="IPR055166">
    <property type="entry name" value="Transc_reg_Sar_Rot_HTH"/>
</dbReference>
<dbReference type="InterPro" id="IPR036388">
    <property type="entry name" value="WH-like_DNA-bd_sf"/>
</dbReference>
<dbReference type="InterPro" id="IPR036390">
    <property type="entry name" value="WH_DNA-bd_sf"/>
</dbReference>
<dbReference type="NCBIfam" id="TIGR01889">
    <property type="entry name" value="Staph_reg_Sar"/>
    <property type="match status" value="1"/>
</dbReference>
<dbReference type="Pfam" id="PF22381">
    <property type="entry name" value="Staph_reg_Sar_Rot"/>
    <property type="match status" value="1"/>
</dbReference>
<dbReference type="SUPFAM" id="SSF46785">
    <property type="entry name" value="Winged helix' DNA-binding domain"/>
    <property type="match status" value="1"/>
</dbReference>
<protein>
    <recommendedName>
        <fullName>HTH-type transcriptional regulator SarX</fullName>
    </recommendedName>
    <alternativeName>
        <fullName>Staphylococcal accessory regulator X</fullName>
    </alternativeName>
</protein>
<evidence type="ECO:0000250" key="1"/>
<evidence type="ECO:0000255" key="2"/>
<evidence type="ECO:0000305" key="3"/>
<reference key="1">
    <citation type="journal article" date="2001" name="Lancet">
        <title>Whole genome sequencing of meticillin-resistant Staphylococcus aureus.</title>
        <authorList>
            <person name="Kuroda M."/>
            <person name="Ohta T."/>
            <person name="Uchiyama I."/>
            <person name="Baba T."/>
            <person name="Yuzawa H."/>
            <person name="Kobayashi I."/>
            <person name="Cui L."/>
            <person name="Oguchi A."/>
            <person name="Aoki K."/>
            <person name="Nagai Y."/>
            <person name="Lian J.-Q."/>
            <person name="Ito T."/>
            <person name="Kanamori M."/>
            <person name="Matsumaru H."/>
            <person name="Maruyama A."/>
            <person name="Murakami H."/>
            <person name="Hosoyama A."/>
            <person name="Mizutani-Ui Y."/>
            <person name="Takahashi N.K."/>
            <person name="Sawano T."/>
            <person name="Inoue R."/>
            <person name="Kaito C."/>
            <person name="Sekimizu K."/>
            <person name="Hirakawa H."/>
            <person name="Kuhara S."/>
            <person name="Goto S."/>
            <person name="Yabuzaki J."/>
            <person name="Kanehisa M."/>
            <person name="Yamashita A."/>
            <person name="Oshima K."/>
            <person name="Furuya K."/>
            <person name="Yoshino C."/>
            <person name="Shiba T."/>
            <person name="Hattori M."/>
            <person name="Ogasawara N."/>
            <person name="Hayashi H."/>
            <person name="Hiramatsu K."/>
        </authorList>
    </citation>
    <scope>NUCLEOTIDE SEQUENCE [LARGE SCALE GENOMIC DNA]</scope>
    <source>
        <strain>N315</strain>
    </source>
</reference>
<sequence>MNTEKLETLLGFYKQYKALSEYIDKKYKLSLNDLAVLDLTMKHCKDEKVLMQSFLKTAMDELDLSRTKLLVSIRRLIEKERLSKVRSSKDERKIYIYLNNDDISKFNALFEDVEQFLNI</sequence>
<gene>
    <name type="primary">sarX</name>
    <name type="ordered locus">SA0623</name>
</gene>
<organism>
    <name type="scientific">Staphylococcus aureus (strain N315)</name>
    <dbReference type="NCBI Taxonomy" id="158879"/>
    <lineage>
        <taxon>Bacteria</taxon>
        <taxon>Bacillati</taxon>
        <taxon>Bacillota</taxon>
        <taxon>Bacilli</taxon>
        <taxon>Bacillales</taxon>
        <taxon>Staphylococcaceae</taxon>
        <taxon>Staphylococcus</taxon>
    </lineage>
</organism>
<accession>Q7A6Y6</accession>
<comment type="function">
    <text evidence="1">Involved in the regulation of virulence genes. Acts as a repressor of the agr locus and consequently targets genes regulated by the agr system such as sspA, hla and hlb. Binds directly to the agr promoter region (By similarity).</text>
</comment>
<comment type="subcellular location">
    <subcellularLocation>
        <location evidence="1">Cytoplasm</location>
    </subcellularLocation>
</comment>
<comment type="similarity">
    <text evidence="3">Belongs to the SarA family.</text>
</comment>
<comment type="sequence caution" evidence="3">
    <conflict type="erroneous initiation">
        <sequence resource="EMBL-CDS" id="BAB41856"/>
    </conflict>
</comment>
<keyword id="KW-0963">Cytoplasm</keyword>
<keyword id="KW-0238">DNA-binding</keyword>
<keyword id="KW-0678">Repressor</keyword>
<keyword id="KW-0804">Transcription</keyword>
<keyword id="KW-0805">Transcription regulation</keyword>
<keyword id="KW-0843">Virulence</keyword>
<name>SARX_STAAN</name>
<feature type="chain" id="PRO_0000259141" description="HTH-type transcriptional regulator SarX">
    <location>
        <begin position="1"/>
        <end position="119"/>
    </location>
</feature>
<feature type="DNA-binding region" description="H-T-H motif" evidence="2">
    <location>
        <begin position="55"/>
        <end position="78"/>
    </location>
</feature>
<proteinExistence type="inferred from homology"/>